<accession>Q725T6</accession>
<evidence type="ECO:0000255" key="1">
    <source>
        <dbReference type="HAMAP-Rule" id="MF_00275"/>
    </source>
</evidence>
<dbReference type="EMBL" id="AE017285">
    <property type="protein sequence ID" value="AAS97807.1"/>
    <property type="molecule type" value="Genomic_DNA"/>
</dbReference>
<dbReference type="RefSeq" id="WP_010940595.1">
    <property type="nucleotide sequence ID" value="NC_002937.3"/>
</dbReference>
<dbReference type="RefSeq" id="YP_012547.1">
    <property type="nucleotide sequence ID" value="NC_002937.3"/>
</dbReference>
<dbReference type="SMR" id="Q725T6"/>
<dbReference type="STRING" id="882.DVU_3339"/>
<dbReference type="PaxDb" id="882-DVU_3339"/>
<dbReference type="EnsemblBacteria" id="AAS97807">
    <property type="protein sequence ID" value="AAS97807"/>
    <property type="gene ID" value="DVU_3339"/>
</dbReference>
<dbReference type="KEGG" id="dvu:DVU_3339"/>
<dbReference type="PATRIC" id="fig|882.5.peg.3032"/>
<dbReference type="eggNOG" id="COG2060">
    <property type="taxonomic scope" value="Bacteria"/>
</dbReference>
<dbReference type="HOGENOM" id="CLU_018614_3_0_7"/>
<dbReference type="OrthoDB" id="9763796at2"/>
<dbReference type="PhylomeDB" id="Q725T6"/>
<dbReference type="Proteomes" id="UP000002194">
    <property type="component" value="Chromosome"/>
</dbReference>
<dbReference type="GO" id="GO:0005886">
    <property type="term" value="C:plasma membrane"/>
    <property type="evidence" value="ECO:0007669"/>
    <property type="project" value="UniProtKB-SubCell"/>
</dbReference>
<dbReference type="GO" id="GO:0008556">
    <property type="term" value="F:P-type potassium transmembrane transporter activity"/>
    <property type="evidence" value="ECO:0007669"/>
    <property type="project" value="InterPro"/>
</dbReference>
<dbReference type="GO" id="GO:0030955">
    <property type="term" value="F:potassium ion binding"/>
    <property type="evidence" value="ECO:0007669"/>
    <property type="project" value="UniProtKB-UniRule"/>
</dbReference>
<dbReference type="HAMAP" id="MF_00275">
    <property type="entry name" value="KdpA"/>
    <property type="match status" value="1"/>
</dbReference>
<dbReference type="InterPro" id="IPR004623">
    <property type="entry name" value="KdpA"/>
</dbReference>
<dbReference type="NCBIfam" id="TIGR00680">
    <property type="entry name" value="kdpA"/>
    <property type="match status" value="1"/>
</dbReference>
<dbReference type="PANTHER" id="PTHR30607">
    <property type="entry name" value="POTASSIUM-TRANSPORTING ATPASE A CHAIN"/>
    <property type="match status" value="1"/>
</dbReference>
<dbReference type="PANTHER" id="PTHR30607:SF2">
    <property type="entry name" value="POTASSIUM-TRANSPORTING ATPASE POTASSIUM-BINDING SUBUNIT"/>
    <property type="match status" value="1"/>
</dbReference>
<dbReference type="Pfam" id="PF03814">
    <property type="entry name" value="KdpA"/>
    <property type="match status" value="1"/>
</dbReference>
<dbReference type="PIRSF" id="PIRSF001294">
    <property type="entry name" value="K_ATPaseA"/>
    <property type="match status" value="1"/>
</dbReference>
<protein>
    <recommendedName>
        <fullName evidence="1">Potassium-transporting ATPase potassium-binding subunit</fullName>
    </recommendedName>
    <alternativeName>
        <fullName evidence="1">ATP phosphohydrolase [potassium-transporting] A chain</fullName>
    </alternativeName>
    <alternativeName>
        <fullName evidence="1">Potassium-binding and translocating subunit A</fullName>
    </alternativeName>
    <alternativeName>
        <fullName evidence="1">Potassium-translocating ATPase A chain</fullName>
    </alternativeName>
</protein>
<reference key="1">
    <citation type="journal article" date="2004" name="Nat. Biotechnol.">
        <title>The genome sequence of the anaerobic, sulfate-reducing bacterium Desulfovibrio vulgaris Hildenborough.</title>
        <authorList>
            <person name="Heidelberg J.F."/>
            <person name="Seshadri R."/>
            <person name="Haveman S.A."/>
            <person name="Hemme C.L."/>
            <person name="Paulsen I.T."/>
            <person name="Kolonay J.F."/>
            <person name="Eisen J.A."/>
            <person name="Ward N.L."/>
            <person name="Methe B.A."/>
            <person name="Brinkac L.M."/>
            <person name="Daugherty S.C."/>
            <person name="DeBoy R.T."/>
            <person name="Dodson R.J."/>
            <person name="Durkin A.S."/>
            <person name="Madupu R."/>
            <person name="Nelson W.C."/>
            <person name="Sullivan S.A."/>
            <person name="Fouts D.E."/>
            <person name="Haft D.H."/>
            <person name="Selengut J."/>
            <person name="Peterson J.D."/>
            <person name="Davidsen T.M."/>
            <person name="Zafar N."/>
            <person name="Zhou L."/>
            <person name="Radune D."/>
            <person name="Dimitrov G."/>
            <person name="Hance M."/>
            <person name="Tran K."/>
            <person name="Khouri H.M."/>
            <person name="Gill J."/>
            <person name="Utterback T.R."/>
            <person name="Feldblyum T.V."/>
            <person name="Wall J.D."/>
            <person name="Voordouw G."/>
            <person name="Fraser C.M."/>
        </authorList>
    </citation>
    <scope>NUCLEOTIDE SEQUENCE [LARGE SCALE GENOMIC DNA]</scope>
    <source>
        <strain>ATCC 29579 / DSM 644 / CCUG 34227 / NCIMB 8303 / VKM B-1760 / Hildenborough</strain>
    </source>
</reference>
<name>KDPA_NITV2</name>
<keyword id="KW-0997">Cell inner membrane</keyword>
<keyword id="KW-1003">Cell membrane</keyword>
<keyword id="KW-0406">Ion transport</keyword>
<keyword id="KW-0472">Membrane</keyword>
<keyword id="KW-0630">Potassium</keyword>
<keyword id="KW-0633">Potassium transport</keyword>
<keyword id="KW-1185">Reference proteome</keyword>
<keyword id="KW-0812">Transmembrane</keyword>
<keyword id="KW-1133">Transmembrane helix</keyword>
<keyword id="KW-0813">Transport</keyword>
<comment type="function">
    <text evidence="1">Part of the high-affinity ATP-driven potassium transport (or Kdp) system, which catalyzes the hydrolysis of ATP coupled with the electrogenic transport of potassium into the cytoplasm. This subunit binds the periplasmic potassium ions and delivers the ions to the membrane domain of KdpB through an intramembrane tunnel.</text>
</comment>
<comment type="subunit">
    <text evidence="1">The system is composed of three essential subunits: KdpA, KdpB and KdpC.</text>
</comment>
<comment type="subcellular location">
    <subcellularLocation>
        <location evidence="1">Cell inner membrane</location>
        <topology evidence="1">Multi-pass membrane protein</topology>
    </subcellularLocation>
</comment>
<comment type="similarity">
    <text evidence="1">Belongs to the KdpA family.</text>
</comment>
<feature type="chain" id="PRO_0000166493" description="Potassium-transporting ATPase potassium-binding subunit">
    <location>
        <begin position="1"/>
        <end position="569"/>
    </location>
</feature>
<feature type="transmembrane region" description="Helical" evidence="1">
    <location>
        <begin position="3"/>
        <end position="23"/>
    </location>
</feature>
<feature type="transmembrane region" description="Helical" evidence="1">
    <location>
        <begin position="68"/>
        <end position="88"/>
    </location>
</feature>
<feature type="transmembrane region" description="Helical" evidence="1">
    <location>
        <begin position="136"/>
        <end position="156"/>
    </location>
</feature>
<feature type="transmembrane region" description="Helical" evidence="1">
    <location>
        <begin position="179"/>
        <end position="199"/>
    </location>
</feature>
<feature type="transmembrane region" description="Helical" evidence="1">
    <location>
        <begin position="259"/>
        <end position="279"/>
    </location>
</feature>
<feature type="transmembrane region" description="Helical" evidence="1">
    <location>
        <begin position="284"/>
        <end position="304"/>
    </location>
</feature>
<feature type="transmembrane region" description="Helical" evidence="1">
    <location>
        <begin position="384"/>
        <end position="404"/>
    </location>
</feature>
<feature type="transmembrane region" description="Helical" evidence="1">
    <location>
        <begin position="422"/>
        <end position="442"/>
    </location>
</feature>
<feature type="transmembrane region" description="Helical" evidence="1">
    <location>
        <begin position="490"/>
        <end position="510"/>
    </location>
</feature>
<feature type="transmembrane region" description="Helical" evidence="1">
    <location>
        <begin position="534"/>
        <end position="554"/>
    </location>
</feature>
<sequence length="569" mass="60178">MQLMEYTQLALFLGLLALMSPVLGRFIGRAVLRGEQTWMHSVLGPVERLIYRASGIRPEARQSWRQYAASLCAFSAAGFLMTFGVLMLQDKLPLNPQGFPGLSWHLAFNTAVSFLTNTNWQSYAGESTVSHFSQMVGLAYHNFVSAAAGLAVAVAVMRGLASQESKTIGNFWADLVRSVLYVLLPISLVLAVVLVGQGVVQTMSAGTEVATLEGGRQFIAMGPTASQVAIKMLGTNGGGFFNANAAHPLENPTALSNLLQMLAIFIIPSSLVFTLGGAVSNRRHAWTVWFVMACLFMVGACSLYRAETLGTPLLTEVAQAPVTNMEGKEVRFGIFGSAMFATVTTDASCGAVNAMHDSLTPLGGLVTLVNMQMGEVIFGGVGSGLYGMVLFILLTVFLAGLMVGRTPDYLGKRIEGREVTLAMLALIIAATPPLLFSAVAAVSGWGQAALNNAGAHGFSEILYAYTSGVQNNGSAFAGLNANSPAWNVTIALAMLIGRFGIMLPMLGVAGSMASRKARPIGEFSFPVSGFTFGLLLTLVIVIVGALTYLPALALGPVVEHFQMLDGLLH</sequence>
<gene>
    <name evidence="1" type="primary">kdpA</name>
    <name type="ordered locus">DVU_3339</name>
</gene>
<organism>
    <name type="scientific">Nitratidesulfovibrio vulgaris (strain ATCC 29579 / DSM 644 / CCUG 34227 / NCIMB 8303 / VKM B-1760 / Hildenborough)</name>
    <name type="common">Desulfovibrio vulgaris</name>
    <dbReference type="NCBI Taxonomy" id="882"/>
    <lineage>
        <taxon>Bacteria</taxon>
        <taxon>Pseudomonadati</taxon>
        <taxon>Thermodesulfobacteriota</taxon>
        <taxon>Desulfovibrionia</taxon>
        <taxon>Desulfovibrionales</taxon>
        <taxon>Desulfovibrionaceae</taxon>
        <taxon>Nitratidesulfovibrio</taxon>
    </lineage>
</organism>
<proteinExistence type="inferred from homology"/>